<dbReference type="EC" id="2.7.2.3" evidence="1"/>
<dbReference type="EMBL" id="AE008917">
    <property type="protein sequence ID" value="AAL51490.1"/>
    <property type="status" value="ALT_INIT"/>
    <property type="molecule type" value="Genomic_DNA"/>
</dbReference>
<dbReference type="PIR" id="AG3290">
    <property type="entry name" value="AG3290"/>
</dbReference>
<dbReference type="RefSeq" id="WP_004684168.1">
    <property type="nucleotide sequence ID" value="NZ_GG703781.1"/>
</dbReference>
<dbReference type="SMR" id="Q8YIY0"/>
<dbReference type="GeneID" id="29593064"/>
<dbReference type="KEGG" id="bme:BMEI0309"/>
<dbReference type="KEGG" id="bmel:DK63_1124"/>
<dbReference type="PATRIC" id="fig|224914.52.peg.1186"/>
<dbReference type="eggNOG" id="COG0126">
    <property type="taxonomic scope" value="Bacteria"/>
</dbReference>
<dbReference type="UniPathway" id="UPA00109">
    <property type="reaction ID" value="UER00185"/>
</dbReference>
<dbReference type="Proteomes" id="UP000000419">
    <property type="component" value="Chromosome I"/>
</dbReference>
<dbReference type="GO" id="GO:0005829">
    <property type="term" value="C:cytosol"/>
    <property type="evidence" value="ECO:0007669"/>
    <property type="project" value="TreeGrafter"/>
</dbReference>
<dbReference type="GO" id="GO:0043531">
    <property type="term" value="F:ADP binding"/>
    <property type="evidence" value="ECO:0007669"/>
    <property type="project" value="TreeGrafter"/>
</dbReference>
<dbReference type="GO" id="GO:0005524">
    <property type="term" value="F:ATP binding"/>
    <property type="evidence" value="ECO:0007669"/>
    <property type="project" value="UniProtKB-KW"/>
</dbReference>
<dbReference type="GO" id="GO:0004618">
    <property type="term" value="F:phosphoglycerate kinase activity"/>
    <property type="evidence" value="ECO:0007669"/>
    <property type="project" value="UniProtKB-UniRule"/>
</dbReference>
<dbReference type="GO" id="GO:0006094">
    <property type="term" value="P:gluconeogenesis"/>
    <property type="evidence" value="ECO:0007669"/>
    <property type="project" value="TreeGrafter"/>
</dbReference>
<dbReference type="GO" id="GO:0006096">
    <property type="term" value="P:glycolytic process"/>
    <property type="evidence" value="ECO:0007669"/>
    <property type="project" value="UniProtKB-UniRule"/>
</dbReference>
<dbReference type="FunFam" id="3.40.50.1260:FF:000006">
    <property type="entry name" value="Phosphoglycerate kinase"/>
    <property type="match status" value="1"/>
</dbReference>
<dbReference type="FunFam" id="3.40.50.1260:FF:000031">
    <property type="entry name" value="Phosphoglycerate kinase 1"/>
    <property type="match status" value="1"/>
</dbReference>
<dbReference type="Gene3D" id="3.40.50.1260">
    <property type="entry name" value="Phosphoglycerate kinase, N-terminal domain"/>
    <property type="match status" value="2"/>
</dbReference>
<dbReference type="HAMAP" id="MF_00145">
    <property type="entry name" value="Phosphoglyc_kinase"/>
    <property type="match status" value="1"/>
</dbReference>
<dbReference type="InterPro" id="IPR001576">
    <property type="entry name" value="Phosphoglycerate_kinase"/>
</dbReference>
<dbReference type="InterPro" id="IPR015911">
    <property type="entry name" value="Phosphoglycerate_kinase_CS"/>
</dbReference>
<dbReference type="InterPro" id="IPR015824">
    <property type="entry name" value="Phosphoglycerate_kinase_N"/>
</dbReference>
<dbReference type="InterPro" id="IPR036043">
    <property type="entry name" value="Phosphoglycerate_kinase_sf"/>
</dbReference>
<dbReference type="PANTHER" id="PTHR11406">
    <property type="entry name" value="PHOSPHOGLYCERATE KINASE"/>
    <property type="match status" value="1"/>
</dbReference>
<dbReference type="PANTHER" id="PTHR11406:SF23">
    <property type="entry name" value="PHOSPHOGLYCERATE KINASE 1, CHLOROPLASTIC-RELATED"/>
    <property type="match status" value="1"/>
</dbReference>
<dbReference type="Pfam" id="PF00162">
    <property type="entry name" value="PGK"/>
    <property type="match status" value="1"/>
</dbReference>
<dbReference type="PIRSF" id="PIRSF000724">
    <property type="entry name" value="Pgk"/>
    <property type="match status" value="1"/>
</dbReference>
<dbReference type="PRINTS" id="PR00477">
    <property type="entry name" value="PHGLYCKINASE"/>
</dbReference>
<dbReference type="SUPFAM" id="SSF53748">
    <property type="entry name" value="Phosphoglycerate kinase"/>
    <property type="match status" value="1"/>
</dbReference>
<dbReference type="PROSITE" id="PS00111">
    <property type="entry name" value="PGLYCERATE_KINASE"/>
    <property type="match status" value="1"/>
</dbReference>
<name>PGK_BRUME</name>
<feature type="chain" id="PRO_0000145916" description="Phosphoglycerate kinase">
    <location>
        <begin position="1"/>
        <end position="396"/>
    </location>
</feature>
<feature type="binding site" evidence="1">
    <location>
        <begin position="21"/>
        <end position="23"/>
    </location>
    <ligand>
        <name>substrate</name>
    </ligand>
</feature>
<feature type="binding site" evidence="1">
    <location>
        <position position="36"/>
    </location>
    <ligand>
        <name>substrate</name>
    </ligand>
</feature>
<feature type="binding site" evidence="1">
    <location>
        <begin position="59"/>
        <end position="62"/>
    </location>
    <ligand>
        <name>substrate</name>
    </ligand>
</feature>
<feature type="binding site" evidence="1">
    <location>
        <position position="118"/>
    </location>
    <ligand>
        <name>substrate</name>
    </ligand>
</feature>
<feature type="binding site" evidence="1">
    <location>
        <position position="151"/>
    </location>
    <ligand>
        <name>substrate</name>
    </ligand>
</feature>
<feature type="binding site" evidence="1">
    <location>
        <position position="201"/>
    </location>
    <ligand>
        <name>ATP</name>
        <dbReference type="ChEBI" id="CHEBI:30616"/>
    </ligand>
</feature>
<feature type="binding site" evidence="1">
    <location>
        <position position="323"/>
    </location>
    <ligand>
        <name>ATP</name>
        <dbReference type="ChEBI" id="CHEBI:30616"/>
    </ligand>
</feature>
<feature type="binding site" evidence="1">
    <location>
        <begin position="353"/>
        <end position="356"/>
    </location>
    <ligand>
        <name>ATP</name>
        <dbReference type="ChEBI" id="CHEBI:30616"/>
    </ligand>
</feature>
<gene>
    <name evidence="1" type="primary">pgk</name>
    <name type="ordered locus">BMEI0309</name>
</gene>
<sequence>MMFRTLDDANVQSKRVLVRVDLNVPMANGEVTDLTRIERIVPTIAELSRKGAKVILLAHFGRPKGVASDENSLKHVVKPLSKVLDHSVHFAEDCIGDKAKAAVDALKDGDVLLLENTRFHKGEEKNDPEFVQALAANGDLYVNDAFSAAHRAHASTEGLAHVLPAFAGRAMQAELEALEKGLGNPARPVVAIVGGAKVSTKLDLLSNLIEKVDALVIGGGMANTFLAAKGLDVGKSLCEHELASTAREIMAKAETTKCAIILPVDAIVGWHFAADTPHQTYGVDSVPGDAMILDAGELSTDLIASAIDDAATLVWNGPLGAFELRPFDTATVKVARHVAKRTKEGKLVSVGGGGDTVAALNHAGVADDFTYISTAGGAFLEWMEGKPLPGVDVLKK</sequence>
<evidence type="ECO:0000255" key="1">
    <source>
        <dbReference type="HAMAP-Rule" id="MF_00145"/>
    </source>
</evidence>
<evidence type="ECO:0000305" key="2"/>
<protein>
    <recommendedName>
        <fullName evidence="1">Phosphoglycerate kinase</fullName>
        <ecNumber evidence="1">2.7.2.3</ecNumber>
    </recommendedName>
</protein>
<keyword id="KW-0067">ATP-binding</keyword>
<keyword id="KW-0963">Cytoplasm</keyword>
<keyword id="KW-0324">Glycolysis</keyword>
<keyword id="KW-0418">Kinase</keyword>
<keyword id="KW-0547">Nucleotide-binding</keyword>
<keyword id="KW-0808">Transferase</keyword>
<comment type="catalytic activity">
    <reaction evidence="1">
        <text>(2R)-3-phosphoglycerate + ATP = (2R)-3-phospho-glyceroyl phosphate + ADP</text>
        <dbReference type="Rhea" id="RHEA:14801"/>
        <dbReference type="ChEBI" id="CHEBI:30616"/>
        <dbReference type="ChEBI" id="CHEBI:57604"/>
        <dbReference type="ChEBI" id="CHEBI:58272"/>
        <dbReference type="ChEBI" id="CHEBI:456216"/>
        <dbReference type="EC" id="2.7.2.3"/>
    </reaction>
</comment>
<comment type="pathway">
    <text evidence="1">Carbohydrate degradation; glycolysis; pyruvate from D-glyceraldehyde 3-phosphate: step 2/5.</text>
</comment>
<comment type="subunit">
    <text evidence="1">Monomer.</text>
</comment>
<comment type="subcellular location">
    <subcellularLocation>
        <location evidence="1">Cytoplasm</location>
    </subcellularLocation>
</comment>
<comment type="similarity">
    <text evidence="1">Belongs to the phosphoglycerate kinase family.</text>
</comment>
<comment type="sequence caution" evidence="2">
    <conflict type="erroneous initiation">
        <sequence resource="EMBL-CDS" id="AAL51490"/>
    </conflict>
</comment>
<reference key="1">
    <citation type="journal article" date="2002" name="Proc. Natl. Acad. Sci. U.S.A.">
        <title>The genome sequence of the facultative intracellular pathogen Brucella melitensis.</title>
        <authorList>
            <person name="DelVecchio V.G."/>
            <person name="Kapatral V."/>
            <person name="Redkar R.J."/>
            <person name="Patra G."/>
            <person name="Mujer C."/>
            <person name="Los T."/>
            <person name="Ivanova N."/>
            <person name="Anderson I."/>
            <person name="Bhattacharyya A."/>
            <person name="Lykidis A."/>
            <person name="Reznik G."/>
            <person name="Jablonski L."/>
            <person name="Larsen N."/>
            <person name="D'Souza M."/>
            <person name="Bernal A."/>
            <person name="Mazur M."/>
            <person name="Goltsman E."/>
            <person name="Selkov E."/>
            <person name="Elzer P.H."/>
            <person name="Hagius S."/>
            <person name="O'Callaghan D."/>
            <person name="Letesson J.-J."/>
            <person name="Haselkorn R."/>
            <person name="Kyrpides N.C."/>
            <person name="Overbeek R."/>
        </authorList>
    </citation>
    <scope>NUCLEOTIDE SEQUENCE [LARGE SCALE GENOMIC DNA]</scope>
    <source>
        <strain>ATCC 23456 / CCUG 17765 / NCTC 10094 / 16M</strain>
    </source>
</reference>
<accession>Q8YIY0</accession>
<organism>
    <name type="scientific">Brucella melitensis biotype 1 (strain ATCC 23456 / CCUG 17765 / NCTC 10094 / 16M)</name>
    <dbReference type="NCBI Taxonomy" id="224914"/>
    <lineage>
        <taxon>Bacteria</taxon>
        <taxon>Pseudomonadati</taxon>
        <taxon>Pseudomonadota</taxon>
        <taxon>Alphaproteobacteria</taxon>
        <taxon>Hyphomicrobiales</taxon>
        <taxon>Brucellaceae</taxon>
        <taxon>Brucella/Ochrobactrum group</taxon>
        <taxon>Brucella</taxon>
    </lineage>
</organism>
<proteinExistence type="inferred from homology"/>